<feature type="chain" id="PRO_1000085212" description="Chaperone protein DnaJ">
    <location>
        <begin position="1"/>
        <end position="377"/>
    </location>
</feature>
<feature type="domain" description="J" evidence="1">
    <location>
        <begin position="5"/>
        <end position="70"/>
    </location>
</feature>
<feature type="repeat" description="CXXCXGXG motif">
    <location>
        <begin position="145"/>
        <end position="152"/>
    </location>
</feature>
<feature type="repeat" description="CXXCXGXG motif">
    <location>
        <begin position="162"/>
        <end position="169"/>
    </location>
</feature>
<feature type="repeat" description="CXXCXGXG motif">
    <location>
        <begin position="184"/>
        <end position="191"/>
    </location>
</feature>
<feature type="repeat" description="CXXCXGXG motif">
    <location>
        <begin position="198"/>
        <end position="205"/>
    </location>
</feature>
<feature type="zinc finger region" description="CR-type" evidence="1">
    <location>
        <begin position="132"/>
        <end position="210"/>
    </location>
</feature>
<feature type="binding site" evidence="1">
    <location>
        <position position="145"/>
    </location>
    <ligand>
        <name>Zn(2+)</name>
        <dbReference type="ChEBI" id="CHEBI:29105"/>
        <label>1</label>
    </ligand>
</feature>
<feature type="binding site" evidence="1">
    <location>
        <position position="148"/>
    </location>
    <ligand>
        <name>Zn(2+)</name>
        <dbReference type="ChEBI" id="CHEBI:29105"/>
        <label>1</label>
    </ligand>
</feature>
<feature type="binding site" evidence="1">
    <location>
        <position position="162"/>
    </location>
    <ligand>
        <name>Zn(2+)</name>
        <dbReference type="ChEBI" id="CHEBI:29105"/>
        <label>2</label>
    </ligand>
</feature>
<feature type="binding site" evidence="1">
    <location>
        <position position="165"/>
    </location>
    <ligand>
        <name>Zn(2+)</name>
        <dbReference type="ChEBI" id="CHEBI:29105"/>
        <label>2</label>
    </ligand>
</feature>
<feature type="binding site" evidence="1">
    <location>
        <position position="184"/>
    </location>
    <ligand>
        <name>Zn(2+)</name>
        <dbReference type="ChEBI" id="CHEBI:29105"/>
        <label>2</label>
    </ligand>
</feature>
<feature type="binding site" evidence="1">
    <location>
        <position position="187"/>
    </location>
    <ligand>
        <name>Zn(2+)</name>
        <dbReference type="ChEBI" id="CHEBI:29105"/>
        <label>2</label>
    </ligand>
</feature>
<feature type="binding site" evidence="1">
    <location>
        <position position="198"/>
    </location>
    <ligand>
        <name>Zn(2+)</name>
        <dbReference type="ChEBI" id="CHEBI:29105"/>
        <label>1</label>
    </ligand>
</feature>
<feature type="binding site" evidence="1">
    <location>
        <position position="201"/>
    </location>
    <ligand>
        <name>Zn(2+)</name>
        <dbReference type="ChEBI" id="CHEBI:29105"/>
        <label>1</label>
    </ligand>
</feature>
<keyword id="KW-0143">Chaperone</keyword>
<keyword id="KW-0963">Cytoplasm</keyword>
<keyword id="KW-0235">DNA replication</keyword>
<keyword id="KW-0479">Metal-binding</keyword>
<keyword id="KW-0677">Repeat</keyword>
<keyword id="KW-0346">Stress response</keyword>
<keyword id="KW-0862">Zinc</keyword>
<keyword id="KW-0863">Zinc-finger</keyword>
<evidence type="ECO:0000255" key="1">
    <source>
        <dbReference type="HAMAP-Rule" id="MF_01152"/>
    </source>
</evidence>
<protein>
    <recommendedName>
        <fullName evidence="1">Chaperone protein DnaJ</fullName>
    </recommendedName>
</protein>
<accession>A6T4F5</accession>
<comment type="function">
    <text evidence="1">Participates actively in the response to hyperosmotic and heat shock by preventing the aggregation of stress-denatured proteins and by disaggregating proteins, also in an autonomous, DnaK-independent fashion. Unfolded proteins bind initially to DnaJ; upon interaction with the DnaJ-bound protein, DnaK hydrolyzes its bound ATP, resulting in the formation of a stable complex. GrpE releases ADP from DnaK; ATP binding to DnaK triggers the release of the substrate protein, thus completing the reaction cycle. Several rounds of ATP-dependent interactions between DnaJ, DnaK and GrpE are required for fully efficient folding. Also involved, together with DnaK and GrpE, in the DNA replication of plasmids through activation of initiation proteins.</text>
</comment>
<comment type="cofactor">
    <cofactor evidence="1">
        <name>Zn(2+)</name>
        <dbReference type="ChEBI" id="CHEBI:29105"/>
    </cofactor>
    <text evidence="1">Binds 2 Zn(2+) ions per monomer.</text>
</comment>
<comment type="subunit">
    <text evidence="1">Homodimer.</text>
</comment>
<comment type="subcellular location">
    <subcellularLocation>
        <location evidence="1">Cytoplasm</location>
    </subcellularLocation>
</comment>
<comment type="domain">
    <text evidence="1">The J domain is necessary and sufficient to stimulate DnaK ATPase activity. Zinc center 1 plays an important role in the autonomous, DnaK-independent chaperone activity of DnaJ. Zinc center 2 is essential for interaction with DnaK and for DnaJ activity.</text>
</comment>
<comment type="similarity">
    <text evidence="1">Belongs to the DnaJ family.</text>
</comment>
<name>DNAJ_KLEP7</name>
<organism>
    <name type="scientific">Klebsiella pneumoniae subsp. pneumoniae (strain ATCC 700721 / MGH 78578)</name>
    <dbReference type="NCBI Taxonomy" id="272620"/>
    <lineage>
        <taxon>Bacteria</taxon>
        <taxon>Pseudomonadati</taxon>
        <taxon>Pseudomonadota</taxon>
        <taxon>Gammaproteobacteria</taxon>
        <taxon>Enterobacterales</taxon>
        <taxon>Enterobacteriaceae</taxon>
        <taxon>Klebsiella/Raoultella group</taxon>
        <taxon>Klebsiella</taxon>
        <taxon>Klebsiella pneumoniae complex</taxon>
    </lineage>
</organism>
<sequence length="377" mass="41010">MAKQDYYEILGVSKTAEEREIKKAYKRLAMKYHPDRNQGDKEAEAKFKEIKEAYEILTDAQKRAAYDQYGHAAFEQGGMGGGGGFGGGADFSDIFGDVFGDIFGGGRGRQRAARGADLRYNMELTLEEAVRGVTKEIRIPTLEECDVCHGSGAKAGSKPQTCPTCHGAGQVQMRQGFFAVQQTCPHCQGRGTLIKDPCNKCHGHGRVEKTKTLSVKIPAGVDTGDRIRLAGEGEAGEHGAPAGDLYVQVQVKQHAIFEREGNNLYCEVPINFTMAALGGEIEVPTLDGRVNLKIPGETQTGKLFRMRGKGVKSVRGGAQGDLLCRVVVETPVGLNEKQKQLLKELQESFGGPTGENNSPRSKSFFDGVKKFFDDLTR</sequence>
<proteinExistence type="inferred from homology"/>
<reference key="1">
    <citation type="submission" date="2006-09" db="EMBL/GenBank/DDBJ databases">
        <authorList>
            <consortium name="The Klebsiella pneumonia Genome Sequencing Project"/>
            <person name="McClelland M."/>
            <person name="Sanderson E.K."/>
            <person name="Spieth J."/>
            <person name="Clifton W.S."/>
            <person name="Latreille P."/>
            <person name="Sabo A."/>
            <person name="Pepin K."/>
            <person name="Bhonagiri V."/>
            <person name="Porwollik S."/>
            <person name="Ali J."/>
            <person name="Wilson R.K."/>
        </authorList>
    </citation>
    <scope>NUCLEOTIDE SEQUENCE [LARGE SCALE GENOMIC DNA]</scope>
    <source>
        <strain>ATCC 700721 / MGH 78578</strain>
    </source>
</reference>
<dbReference type="EMBL" id="CP000647">
    <property type="protein sequence ID" value="ABR75476.1"/>
    <property type="molecule type" value="Genomic_DNA"/>
</dbReference>
<dbReference type="RefSeq" id="WP_002887955.1">
    <property type="nucleotide sequence ID" value="NC_009648.1"/>
</dbReference>
<dbReference type="SMR" id="A6T4F5"/>
<dbReference type="STRING" id="272620.KPN_00015"/>
<dbReference type="jPOST" id="A6T4F5"/>
<dbReference type="PaxDb" id="272620-KPN_00015"/>
<dbReference type="DNASU" id="5338437"/>
<dbReference type="EnsemblBacteria" id="ABR75476">
    <property type="protein sequence ID" value="ABR75476"/>
    <property type="gene ID" value="KPN_00015"/>
</dbReference>
<dbReference type="GeneID" id="69757192"/>
<dbReference type="KEGG" id="kpn:KPN_00015"/>
<dbReference type="HOGENOM" id="CLU_017633_0_7_6"/>
<dbReference type="Proteomes" id="UP000000265">
    <property type="component" value="Chromosome"/>
</dbReference>
<dbReference type="GO" id="GO:0005737">
    <property type="term" value="C:cytoplasm"/>
    <property type="evidence" value="ECO:0007669"/>
    <property type="project" value="UniProtKB-SubCell"/>
</dbReference>
<dbReference type="GO" id="GO:0005524">
    <property type="term" value="F:ATP binding"/>
    <property type="evidence" value="ECO:0007669"/>
    <property type="project" value="InterPro"/>
</dbReference>
<dbReference type="GO" id="GO:0031072">
    <property type="term" value="F:heat shock protein binding"/>
    <property type="evidence" value="ECO:0007669"/>
    <property type="project" value="InterPro"/>
</dbReference>
<dbReference type="GO" id="GO:0051082">
    <property type="term" value="F:unfolded protein binding"/>
    <property type="evidence" value="ECO:0007669"/>
    <property type="project" value="UniProtKB-UniRule"/>
</dbReference>
<dbReference type="GO" id="GO:0008270">
    <property type="term" value="F:zinc ion binding"/>
    <property type="evidence" value="ECO:0007669"/>
    <property type="project" value="UniProtKB-UniRule"/>
</dbReference>
<dbReference type="GO" id="GO:0051085">
    <property type="term" value="P:chaperone cofactor-dependent protein refolding"/>
    <property type="evidence" value="ECO:0007669"/>
    <property type="project" value="TreeGrafter"/>
</dbReference>
<dbReference type="GO" id="GO:0006260">
    <property type="term" value="P:DNA replication"/>
    <property type="evidence" value="ECO:0007669"/>
    <property type="project" value="UniProtKB-KW"/>
</dbReference>
<dbReference type="GO" id="GO:0042026">
    <property type="term" value="P:protein refolding"/>
    <property type="evidence" value="ECO:0007669"/>
    <property type="project" value="TreeGrafter"/>
</dbReference>
<dbReference type="GO" id="GO:0009408">
    <property type="term" value="P:response to heat"/>
    <property type="evidence" value="ECO:0007669"/>
    <property type="project" value="InterPro"/>
</dbReference>
<dbReference type="CDD" id="cd06257">
    <property type="entry name" value="DnaJ"/>
    <property type="match status" value="1"/>
</dbReference>
<dbReference type="CDD" id="cd10747">
    <property type="entry name" value="DnaJ_C"/>
    <property type="match status" value="1"/>
</dbReference>
<dbReference type="CDD" id="cd10719">
    <property type="entry name" value="DnaJ_zf"/>
    <property type="match status" value="1"/>
</dbReference>
<dbReference type="FunFam" id="1.10.287.110:FF:000003">
    <property type="entry name" value="Molecular chaperone DnaJ"/>
    <property type="match status" value="1"/>
</dbReference>
<dbReference type="FunFam" id="2.10.230.10:FF:000002">
    <property type="entry name" value="Molecular chaperone DnaJ"/>
    <property type="match status" value="1"/>
</dbReference>
<dbReference type="FunFam" id="2.60.260.20:FF:000004">
    <property type="entry name" value="Molecular chaperone DnaJ"/>
    <property type="match status" value="1"/>
</dbReference>
<dbReference type="Gene3D" id="1.10.287.110">
    <property type="entry name" value="DnaJ domain"/>
    <property type="match status" value="1"/>
</dbReference>
<dbReference type="Gene3D" id="2.10.230.10">
    <property type="entry name" value="Heat shock protein DnaJ, cysteine-rich domain"/>
    <property type="match status" value="1"/>
</dbReference>
<dbReference type="Gene3D" id="2.60.260.20">
    <property type="entry name" value="Urease metallochaperone UreE, N-terminal domain"/>
    <property type="match status" value="2"/>
</dbReference>
<dbReference type="HAMAP" id="MF_01152">
    <property type="entry name" value="DnaJ"/>
    <property type="match status" value="1"/>
</dbReference>
<dbReference type="InterPro" id="IPR012724">
    <property type="entry name" value="DnaJ"/>
</dbReference>
<dbReference type="InterPro" id="IPR002939">
    <property type="entry name" value="DnaJ_C"/>
</dbReference>
<dbReference type="InterPro" id="IPR001623">
    <property type="entry name" value="DnaJ_domain"/>
</dbReference>
<dbReference type="InterPro" id="IPR018253">
    <property type="entry name" value="DnaJ_domain_CS"/>
</dbReference>
<dbReference type="InterPro" id="IPR008971">
    <property type="entry name" value="HSP40/DnaJ_pept-bd"/>
</dbReference>
<dbReference type="InterPro" id="IPR001305">
    <property type="entry name" value="HSP_DnaJ_Cys-rich_dom"/>
</dbReference>
<dbReference type="InterPro" id="IPR036410">
    <property type="entry name" value="HSP_DnaJ_Cys-rich_dom_sf"/>
</dbReference>
<dbReference type="InterPro" id="IPR036869">
    <property type="entry name" value="J_dom_sf"/>
</dbReference>
<dbReference type="NCBIfam" id="TIGR02349">
    <property type="entry name" value="DnaJ_bact"/>
    <property type="match status" value="1"/>
</dbReference>
<dbReference type="NCBIfam" id="NF008035">
    <property type="entry name" value="PRK10767.1"/>
    <property type="match status" value="1"/>
</dbReference>
<dbReference type="PANTHER" id="PTHR43096:SF48">
    <property type="entry name" value="CHAPERONE PROTEIN DNAJ"/>
    <property type="match status" value="1"/>
</dbReference>
<dbReference type="PANTHER" id="PTHR43096">
    <property type="entry name" value="DNAJ HOMOLOG 1, MITOCHONDRIAL-RELATED"/>
    <property type="match status" value="1"/>
</dbReference>
<dbReference type="Pfam" id="PF00226">
    <property type="entry name" value="DnaJ"/>
    <property type="match status" value="1"/>
</dbReference>
<dbReference type="Pfam" id="PF01556">
    <property type="entry name" value="DnaJ_C"/>
    <property type="match status" value="1"/>
</dbReference>
<dbReference type="Pfam" id="PF00684">
    <property type="entry name" value="DnaJ_CXXCXGXG"/>
    <property type="match status" value="1"/>
</dbReference>
<dbReference type="PRINTS" id="PR00625">
    <property type="entry name" value="JDOMAIN"/>
</dbReference>
<dbReference type="SMART" id="SM00271">
    <property type="entry name" value="DnaJ"/>
    <property type="match status" value="1"/>
</dbReference>
<dbReference type="SUPFAM" id="SSF46565">
    <property type="entry name" value="Chaperone J-domain"/>
    <property type="match status" value="1"/>
</dbReference>
<dbReference type="SUPFAM" id="SSF57938">
    <property type="entry name" value="DnaJ/Hsp40 cysteine-rich domain"/>
    <property type="match status" value="1"/>
</dbReference>
<dbReference type="SUPFAM" id="SSF49493">
    <property type="entry name" value="HSP40/DnaJ peptide-binding domain"/>
    <property type="match status" value="2"/>
</dbReference>
<dbReference type="PROSITE" id="PS00636">
    <property type="entry name" value="DNAJ_1"/>
    <property type="match status" value="1"/>
</dbReference>
<dbReference type="PROSITE" id="PS50076">
    <property type="entry name" value="DNAJ_2"/>
    <property type="match status" value="1"/>
</dbReference>
<dbReference type="PROSITE" id="PS51188">
    <property type="entry name" value="ZF_CR"/>
    <property type="match status" value="1"/>
</dbReference>
<gene>
    <name evidence="1" type="primary">dnaJ</name>
    <name type="ordered locus">KPN78578_00150</name>
    <name type="ORF">KPN_00015</name>
</gene>